<proteinExistence type="evidence at protein level"/>
<organism>
    <name type="scientific">Rhodobacter capsulatus (strain ATCC BAA-309 / NBRC 16581 / SB1003)</name>
    <dbReference type="NCBI Taxonomy" id="272942"/>
    <lineage>
        <taxon>Bacteria</taxon>
        <taxon>Pseudomonadati</taxon>
        <taxon>Pseudomonadota</taxon>
        <taxon>Alphaproteobacteria</taxon>
        <taxon>Rhodobacterales</taxon>
        <taxon>Rhodobacter group</taxon>
        <taxon>Rhodobacter</taxon>
    </lineage>
</organism>
<keyword id="KW-0003">3Fe-4S</keyword>
<keyword id="KW-0004">4Fe-4S</keyword>
<keyword id="KW-0903">Direct protein sequencing</keyword>
<keyword id="KW-0249">Electron transport</keyword>
<keyword id="KW-0408">Iron</keyword>
<keyword id="KW-0411">Iron-sulfur</keyword>
<keyword id="KW-0479">Metal-binding</keyword>
<keyword id="KW-1185">Reference proteome</keyword>
<keyword id="KW-0677">Repeat</keyword>
<keyword id="KW-0813">Transport</keyword>
<accession>D5AP15</accession>
<accession>P18082</accession>
<evidence type="ECO:0000250" key="1"/>
<evidence type="ECO:0000255" key="2">
    <source>
        <dbReference type="PROSITE-ProRule" id="PRU00711"/>
    </source>
</evidence>
<evidence type="ECO:0000256" key="3">
    <source>
        <dbReference type="SAM" id="MobiDB-lite"/>
    </source>
</evidence>
<evidence type="ECO:0000269" key="4">
    <source>
    </source>
</evidence>
<sequence>MTYVVTDNCIACKYTDCVEVCPVDCFYEGENTLVIHPDECIDCGVCEPECPADAIRPDTEPGMEDWVEFNRTYASQWPVITIKKDPMPDHKKYDGETGKREKYFSPNPGTGD</sequence>
<gene>
    <name type="primary">fdxA</name>
    <name type="ordered locus">RCAP_rcc02791</name>
</gene>
<dbReference type="EMBL" id="M64555">
    <property type="protein sequence ID" value="AAA26108.1"/>
    <property type="molecule type" value="Genomic_DNA"/>
</dbReference>
<dbReference type="EMBL" id="CP001312">
    <property type="protein sequence ID" value="ADE86520.1"/>
    <property type="molecule type" value="Genomic_DNA"/>
</dbReference>
<dbReference type="PIR" id="S10976">
    <property type="entry name" value="FERF2C"/>
</dbReference>
<dbReference type="RefSeq" id="WP_013068498.1">
    <property type="nucleotide sequence ID" value="NC_014034.1"/>
</dbReference>
<dbReference type="SMR" id="D5AP15"/>
<dbReference type="STRING" id="272942.RCAP_rcc02791"/>
<dbReference type="GeneID" id="31491607"/>
<dbReference type="KEGG" id="rcp:RCAP_rcc02791"/>
<dbReference type="eggNOG" id="COG1146">
    <property type="taxonomic scope" value="Bacteria"/>
</dbReference>
<dbReference type="HOGENOM" id="CLU_139698_0_0_5"/>
<dbReference type="OrthoDB" id="9803397at2"/>
<dbReference type="Proteomes" id="UP000002361">
    <property type="component" value="Chromosome"/>
</dbReference>
<dbReference type="GO" id="GO:0051538">
    <property type="term" value="F:3 iron, 4 sulfur cluster binding"/>
    <property type="evidence" value="ECO:0007669"/>
    <property type="project" value="UniProtKB-KW"/>
</dbReference>
<dbReference type="GO" id="GO:0051539">
    <property type="term" value="F:4 iron, 4 sulfur cluster binding"/>
    <property type="evidence" value="ECO:0007669"/>
    <property type="project" value="UniProtKB-KW"/>
</dbReference>
<dbReference type="GO" id="GO:0009055">
    <property type="term" value="F:electron transfer activity"/>
    <property type="evidence" value="ECO:0007669"/>
    <property type="project" value="InterPro"/>
</dbReference>
<dbReference type="GO" id="GO:0046872">
    <property type="term" value="F:metal ion binding"/>
    <property type="evidence" value="ECO:0007669"/>
    <property type="project" value="UniProtKB-KW"/>
</dbReference>
<dbReference type="Gene3D" id="3.30.70.20">
    <property type="match status" value="1"/>
</dbReference>
<dbReference type="InterPro" id="IPR017896">
    <property type="entry name" value="4Fe4S_Fe-S-bd"/>
</dbReference>
<dbReference type="InterPro" id="IPR017900">
    <property type="entry name" value="4Fe4S_Fe_S_CS"/>
</dbReference>
<dbReference type="InterPro" id="IPR000813">
    <property type="entry name" value="7Fe_ferredoxin"/>
</dbReference>
<dbReference type="InterPro" id="IPR022569">
    <property type="entry name" value="Fd_C"/>
</dbReference>
<dbReference type="InterPro" id="IPR054829">
    <property type="entry name" value="FdxA"/>
</dbReference>
<dbReference type="InterPro" id="IPR050294">
    <property type="entry name" value="RnfB_subfamily"/>
</dbReference>
<dbReference type="NCBIfam" id="NF045490">
    <property type="entry name" value="FdxA_Protbact"/>
    <property type="match status" value="1"/>
</dbReference>
<dbReference type="PANTHER" id="PTHR42859:SF2">
    <property type="entry name" value="FERREDOXIN"/>
    <property type="match status" value="1"/>
</dbReference>
<dbReference type="PANTHER" id="PTHR42859">
    <property type="entry name" value="OXIDOREDUCTASE"/>
    <property type="match status" value="1"/>
</dbReference>
<dbReference type="Pfam" id="PF11953">
    <property type="entry name" value="DUF3470"/>
    <property type="match status" value="1"/>
</dbReference>
<dbReference type="Pfam" id="PF00037">
    <property type="entry name" value="Fer4"/>
    <property type="match status" value="1"/>
</dbReference>
<dbReference type="PRINTS" id="PR00354">
    <property type="entry name" value="7FE8SFRDOXIN"/>
</dbReference>
<dbReference type="SUPFAM" id="SSF54862">
    <property type="entry name" value="4Fe-4S ferredoxins"/>
    <property type="match status" value="1"/>
</dbReference>
<dbReference type="PROSITE" id="PS00198">
    <property type="entry name" value="4FE4S_FER_1"/>
    <property type="match status" value="1"/>
</dbReference>
<dbReference type="PROSITE" id="PS51379">
    <property type="entry name" value="4FE4S_FER_2"/>
    <property type="match status" value="2"/>
</dbReference>
<protein>
    <recommendedName>
        <fullName>Ferredoxin-2</fullName>
    </recommendedName>
    <alternativeName>
        <fullName>Ferredoxin II</fullName>
        <shortName>FdII</shortName>
    </alternativeName>
</protein>
<name>FER2_RHOCB</name>
<reference key="1">
    <citation type="journal article" date="1991" name="J. Biol. Chem.">
        <title>Genetic analysis of functional differences among distinct ferredoxins in Rhodobacter capsulatus.</title>
        <authorList>
            <person name="Saeki K."/>
            <person name="Suetsugu Y."/>
            <person name="Tokuda K."/>
            <person name="Miyatake Y."/>
            <person name="Young D.A."/>
            <person name="Marrs B.L."/>
            <person name="Matsubara H."/>
        </authorList>
    </citation>
    <scope>NUCLEOTIDE SEQUENCE [GENOMIC DNA]</scope>
    <source>
        <strain>ATCC BAA-309 / NBRC 16581 / SB1003</strain>
    </source>
</reference>
<reference key="2">
    <citation type="journal article" date="2010" name="J. Bacteriol.">
        <title>Complete genome sequence of the photosynthetic purple nonsulfur bacterium Rhodobacter capsulatus SB 1003.</title>
        <authorList>
            <person name="Strnad H."/>
            <person name="Lapidus A."/>
            <person name="Paces J."/>
            <person name="Ulbrich P."/>
            <person name="Vlcek C."/>
            <person name="Paces V."/>
            <person name="Haselkorn R."/>
        </authorList>
    </citation>
    <scope>NUCLEOTIDE SEQUENCE [LARGE SCALE GENOMIC DNA]</scope>
    <source>
        <strain>ATCC BAA-309 / NBRC 16581 / SB1003</strain>
    </source>
</reference>
<reference key="3">
    <citation type="journal article" date="1990" name="J. Biochem.">
        <title>Two distinct ferredoxins from Rhodobacter capsulatus: complete amino acid sequences and molecular evolution.</title>
        <authorList>
            <person name="Saeki K."/>
            <person name="Suetsugu Y."/>
            <person name="Yao Y."/>
            <person name="Horio T."/>
            <person name="Marrs B.L."/>
            <person name="Matsubara H."/>
        </authorList>
    </citation>
    <scope>PROTEIN SEQUENCE OF 2-112</scope>
    <source>
        <strain>ATCC BAA-309 / NBRC 16581 / SB1003</strain>
    </source>
</reference>
<feature type="initiator methionine" description="Removed" evidence="4">
    <location>
        <position position="1"/>
    </location>
</feature>
<feature type="chain" id="PRO_0000410436" description="Ferredoxin-2">
    <location>
        <begin position="2"/>
        <end position="112"/>
    </location>
</feature>
<feature type="domain" description="4Fe-4S ferredoxin-type 1" evidence="2">
    <location>
        <begin position="2"/>
        <end position="30"/>
    </location>
</feature>
<feature type="domain" description="4Fe-4S ferredoxin-type 2" evidence="2">
    <location>
        <begin position="31"/>
        <end position="60"/>
    </location>
</feature>
<feature type="region of interest" description="Disordered" evidence="3">
    <location>
        <begin position="85"/>
        <end position="112"/>
    </location>
</feature>
<feature type="compositionally biased region" description="Basic and acidic residues" evidence="3">
    <location>
        <begin position="85"/>
        <end position="103"/>
    </location>
</feature>
<feature type="binding site" evidence="1">
    <location>
        <position position="9"/>
    </location>
    <ligand>
        <name>[3Fe-4S] cluster</name>
        <dbReference type="ChEBI" id="CHEBI:21137"/>
    </ligand>
</feature>
<feature type="binding site" evidence="1">
    <location>
        <position position="17"/>
    </location>
    <ligand>
        <name>[3Fe-4S] cluster</name>
        <dbReference type="ChEBI" id="CHEBI:21137"/>
    </ligand>
</feature>
<feature type="binding site" evidence="1">
    <location>
        <position position="21"/>
    </location>
    <ligand>
        <name>[4Fe-4S] cluster</name>
        <dbReference type="ChEBI" id="CHEBI:49883"/>
    </ligand>
</feature>
<feature type="binding site" evidence="1">
    <location>
        <position position="40"/>
    </location>
    <ligand>
        <name>[4Fe-4S] cluster</name>
        <dbReference type="ChEBI" id="CHEBI:49883"/>
    </ligand>
</feature>
<feature type="binding site" evidence="1">
    <location>
        <position position="43"/>
    </location>
    <ligand>
        <name>[4Fe-4S] cluster</name>
        <dbReference type="ChEBI" id="CHEBI:49883"/>
    </ligand>
</feature>
<feature type="binding site" evidence="1">
    <location>
        <position position="46"/>
    </location>
    <ligand>
        <name>[4Fe-4S] cluster</name>
        <dbReference type="ChEBI" id="CHEBI:49883"/>
    </ligand>
</feature>
<feature type="binding site" evidence="1">
    <location>
        <position position="50"/>
    </location>
    <ligand>
        <name>[3Fe-4S] cluster</name>
        <dbReference type="ChEBI" id="CHEBI:21137"/>
    </ligand>
</feature>
<comment type="function">
    <text>Ferredoxins are iron-sulfur proteins that transfer electrons in a wide variety of metabolic reactions.</text>
</comment>
<comment type="cofactor">
    <cofactor>
        <name>[4Fe-4S] cluster</name>
        <dbReference type="ChEBI" id="CHEBI:49883"/>
    </cofactor>
    <text>Binds 1 [4Fe-4S] cluster.</text>
</comment>
<comment type="cofactor">
    <cofactor>
        <name>[3Fe-4S] cluster</name>
        <dbReference type="ChEBI" id="CHEBI:21137"/>
    </cofactor>
    <text>Binds 1 [3Fe-4S] cluster.</text>
</comment>